<gene>
    <name evidence="1" type="primary">ispH</name>
    <name type="ordered locus">DP2166</name>
</gene>
<sequence length="313" mass="34414">MSSESDKKLEIRLASPRGFCAGVERAIETVKLALKEHGEPVYVLHEIVHNRHVIDNLRQGGAVFVEELEQIPAGAICIFSAHGVSLQIEKRAKALGLKTIDATCPLVSSVHRMVEKYHAEGCSVVIIGHHRHPEVEGTAGRVTGEVYVVATAAEAEKLQVNNSEKIAFVTQTTLAENDIEQVLVVLRRRFPLLQGPKSNICFATQNRQNAVRTLARCTDLILVVGSKNSSNSNRLREVGTETGTPAYLIDDFKDLKESWFRGCERVGITAGASAPESLVEGVVVWLLKRGRYEITEMTGQQEKVHFKAASLID</sequence>
<feature type="chain" id="PRO_0000128810" description="4-hydroxy-3-methylbut-2-enyl diphosphate reductase">
    <location>
        <begin position="1"/>
        <end position="313"/>
    </location>
</feature>
<feature type="active site" description="Proton donor" evidence="1">
    <location>
        <position position="134"/>
    </location>
</feature>
<feature type="binding site" evidence="1">
    <location>
        <position position="20"/>
    </location>
    <ligand>
        <name>[4Fe-4S] cluster</name>
        <dbReference type="ChEBI" id="CHEBI:49883"/>
    </ligand>
</feature>
<feature type="binding site" evidence="1">
    <location>
        <position position="49"/>
    </location>
    <ligand>
        <name>(2E)-4-hydroxy-3-methylbut-2-enyl diphosphate</name>
        <dbReference type="ChEBI" id="CHEBI:128753"/>
    </ligand>
</feature>
<feature type="binding site" evidence="1">
    <location>
        <position position="49"/>
    </location>
    <ligand>
        <name>dimethylallyl diphosphate</name>
        <dbReference type="ChEBI" id="CHEBI:57623"/>
    </ligand>
</feature>
<feature type="binding site" evidence="1">
    <location>
        <position position="49"/>
    </location>
    <ligand>
        <name>isopentenyl diphosphate</name>
        <dbReference type="ChEBI" id="CHEBI:128769"/>
    </ligand>
</feature>
<feature type="binding site" evidence="1">
    <location>
        <position position="82"/>
    </location>
    <ligand>
        <name>(2E)-4-hydroxy-3-methylbut-2-enyl diphosphate</name>
        <dbReference type="ChEBI" id="CHEBI:128753"/>
    </ligand>
</feature>
<feature type="binding site" evidence="1">
    <location>
        <position position="82"/>
    </location>
    <ligand>
        <name>dimethylallyl diphosphate</name>
        <dbReference type="ChEBI" id="CHEBI:57623"/>
    </ligand>
</feature>
<feature type="binding site" evidence="1">
    <location>
        <position position="82"/>
    </location>
    <ligand>
        <name>isopentenyl diphosphate</name>
        <dbReference type="ChEBI" id="CHEBI:128769"/>
    </ligand>
</feature>
<feature type="binding site" evidence="1">
    <location>
        <position position="104"/>
    </location>
    <ligand>
        <name>[4Fe-4S] cluster</name>
        <dbReference type="ChEBI" id="CHEBI:49883"/>
    </ligand>
</feature>
<feature type="binding site" evidence="1">
    <location>
        <position position="132"/>
    </location>
    <ligand>
        <name>(2E)-4-hydroxy-3-methylbut-2-enyl diphosphate</name>
        <dbReference type="ChEBI" id="CHEBI:128753"/>
    </ligand>
</feature>
<feature type="binding site" evidence="1">
    <location>
        <position position="132"/>
    </location>
    <ligand>
        <name>dimethylallyl diphosphate</name>
        <dbReference type="ChEBI" id="CHEBI:57623"/>
    </ligand>
</feature>
<feature type="binding site" evidence="1">
    <location>
        <position position="132"/>
    </location>
    <ligand>
        <name>isopentenyl diphosphate</name>
        <dbReference type="ChEBI" id="CHEBI:128769"/>
    </ligand>
</feature>
<feature type="binding site" evidence="1">
    <location>
        <position position="172"/>
    </location>
    <ligand>
        <name>(2E)-4-hydroxy-3-methylbut-2-enyl diphosphate</name>
        <dbReference type="ChEBI" id="CHEBI:128753"/>
    </ligand>
</feature>
<feature type="binding site" evidence="1">
    <location>
        <position position="201"/>
    </location>
    <ligand>
        <name>[4Fe-4S] cluster</name>
        <dbReference type="ChEBI" id="CHEBI:49883"/>
    </ligand>
</feature>
<feature type="binding site" evidence="1">
    <location>
        <position position="229"/>
    </location>
    <ligand>
        <name>(2E)-4-hydroxy-3-methylbut-2-enyl diphosphate</name>
        <dbReference type="ChEBI" id="CHEBI:128753"/>
    </ligand>
</feature>
<feature type="binding site" evidence="1">
    <location>
        <position position="229"/>
    </location>
    <ligand>
        <name>dimethylallyl diphosphate</name>
        <dbReference type="ChEBI" id="CHEBI:57623"/>
    </ligand>
</feature>
<feature type="binding site" evidence="1">
    <location>
        <position position="229"/>
    </location>
    <ligand>
        <name>isopentenyl diphosphate</name>
        <dbReference type="ChEBI" id="CHEBI:128769"/>
    </ligand>
</feature>
<feature type="binding site" evidence="1">
    <location>
        <position position="230"/>
    </location>
    <ligand>
        <name>(2E)-4-hydroxy-3-methylbut-2-enyl diphosphate</name>
        <dbReference type="ChEBI" id="CHEBI:128753"/>
    </ligand>
</feature>
<feature type="binding site" evidence="1">
    <location>
        <position position="230"/>
    </location>
    <ligand>
        <name>dimethylallyl diphosphate</name>
        <dbReference type="ChEBI" id="CHEBI:57623"/>
    </ligand>
</feature>
<feature type="binding site" evidence="1">
    <location>
        <position position="230"/>
    </location>
    <ligand>
        <name>isopentenyl diphosphate</name>
        <dbReference type="ChEBI" id="CHEBI:128769"/>
    </ligand>
</feature>
<feature type="binding site" evidence="1">
    <location>
        <position position="231"/>
    </location>
    <ligand>
        <name>(2E)-4-hydroxy-3-methylbut-2-enyl diphosphate</name>
        <dbReference type="ChEBI" id="CHEBI:128753"/>
    </ligand>
</feature>
<feature type="binding site" evidence="1">
    <location>
        <position position="231"/>
    </location>
    <ligand>
        <name>dimethylallyl diphosphate</name>
        <dbReference type="ChEBI" id="CHEBI:57623"/>
    </ligand>
</feature>
<feature type="binding site" evidence="1">
    <location>
        <position position="231"/>
    </location>
    <ligand>
        <name>isopentenyl diphosphate</name>
        <dbReference type="ChEBI" id="CHEBI:128769"/>
    </ligand>
</feature>
<feature type="binding site" evidence="1">
    <location>
        <position position="273"/>
    </location>
    <ligand>
        <name>(2E)-4-hydroxy-3-methylbut-2-enyl diphosphate</name>
        <dbReference type="ChEBI" id="CHEBI:128753"/>
    </ligand>
</feature>
<feature type="binding site" evidence="1">
    <location>
        <position position="273"/>
    </location>
    <ligand>
        <name>dimethylallyl diphosphate</name>
        <dbReference type="ChEBI" id="CHEBI:57623"/>
    </ligand>
</feature>
<feature type="binding site" evidence="1">
    <location>
        <position position="273"/>
    </location>
    <ligand>
        <name>isopentenyl diphosphate</name>
        <dbReference type="ChEBI" id="CHEBI:128769"/>
    </ligand>
</feature>
<name>ISPH_DESPS</name>
<proteinExistence type="inferred from homology"/>
<reference key="1">
    <citation type="journal article" date="2004" name="Environ. Microbiol.">
        <title>The genome of Desulfotalea psychrophila, a sulfate-reducing bacterium from permanently cold Arctic sediments.</title>
        <authorList>
            <person name="Rabus R."/>
            <person name="Ruepp A."/>
            <person name="Frickey T."/>
            <person name="Rattei T."/>
            <person name="Fartmann B."/>
            <person name="Stark M."/>
            <person name="Bauer M."/>
            <person name="Zibat A."/>
            <person name="Lombardot T."/>
            <person name="Becker I."/>
            <person name="Amann J."/>
            <person name="Gellner K."/>
            <person name="Teeling H."/>
            <person name="Leuschner W.D."/>
            <person name="Gloeckner F.-O."/>
            <person name="Lupas A.N."/>
            <person name="Amann R."/>
            <person name="Klenk H.-P."/>
        </authorList>
    </citation>
    <scope>NUCLEOTIDE SEQUENCE [LARGE SCALE GENOMIC DNA]</scope>
    <source>
        <strain>DSM 12343 / LSv54</strain>
    </source>
</reference>
<accession>Q6AL80</accession>
<dbReference type="EC" id="1.17.7.4" evidence="1"/>
<dbReference type="EMBL" id="CR522870">
    <property type="protein sequence ID" value="CAG36895.1"/>
    <property type="molecule type" value="Genomic_DNA"/>
</dbReference>
<dbReference type="RefSeq" id="WP_011189407.1">
    <property type="nucleotide sequence ID" value="NC_006138.1"/>
</dbReference>
<dbReference type="SMR" id="Q6AL80"/>
<dbReference type="STRING" id="177439.DP2166"/>
<dbReference type="KEGG" id="dps:DP2166"/>
<dbReference type="eggNOG" id="COG0761">
    <property type="taxonomic scope" value="Bacteria"/>
</dbReference>
<dbReference type="HOGENOM" id="CLU_027486_1_0_7"/>
<dbReference type="OrthoDB" id="9804068at2"/>
<dbReference type="UniPathway" id="UPA00056">
    <property type="reaction ID" value="UER00097"/>
</dbReference>
<dbReference type="UniPathway" id="UPA00059">
    <property type="reaction ID" value="UER00105"/>
</dbReference>
<dbReference type="Proteomes" id="UP000000602">
    <property type="component" value="Chromosome"/>
</dbReference>
<dbReference type="GO" id="GO:0051539">
    <property type="term" value="F:4 iron, 4 sulfur cluster binding"/>
    <property type="evidence" value="ECO:0007669"/>
    <property type="project" value="UniProtKB-UniRule"/>
</dbReference>
<dbReference type="GO" id="GO:0051745">
    <property type="term" value="F:4-hydroxy-3-methylbut-2-enyl diphosphate reductase activity"/>
    <property type="evidence" value="ECO:0007669"/>
    <property type="project" value="UniProtKB-UniRule"/>
</dbReference>
<dbReference type="GO" id="GO:0046872">
    <property type="term" value="F:metal ion binding"/>
    <property type="evidence" value="ECO:0007669"/>
    <property type="project" value="UniProtKB-KW"/>
</dbReference>
<dbReference type="GO" id="GO:0050992">
    <property type="term" value="P:dimethylallyl diphosphate biosynthetic process"/>
    <property type="evidence" value="ECO:0007669"/>
    <property type="project" value="UniProtKB-UniRule"/>
</dbReference>
<dbReference type="GO" id="GO:0019288">
    <property type="term" value="P:isopentenyl diphosphate biosynthetic process, methylerythritol 4-phosphate pathway"/>
    <property type="evidence" value="ECO:0007669"/>
    <property type="project" value="UniProtKB-UniRule"/>
</dbReference>
<dbReference type="GO" id="GO:0016114">
    <property type="term" value="P:terpenoid biosynthetic process"/>
    <property type="evidence" value="ECO:0007669"/>
    <property type="project" value="UniProtKB-UniRule"/>
</dbReference>
<dbReference type="CDD" id="cd13944">
    <property type="entry name" value="lytB_ispH"/>
    <property type="match status" value="1"/>
</dbReference>
<dbReference type="Gene3D" id="3.40.50.11270">
    <property type="match status" value="1"/>
</dbReference>
<dbReference type="Gene3D" id="3.40.1010.20">
    <property type="entry name" value="4-hydroxy-3-methylbut-2-enyl diphosphate reductase, catalytic domain"/>
    <property type="match status" value="2"/>
</dbReference>
<dbReference type="HAMAP" id="MF_00191">
    <property type="entry name" value="IspH"/>
    <property type="match status" value="1"/>
</dbReference>
<dbReference type="InterPro" id="IPR003451">
    <property type="entry name" value="LytB/IspH"/>
</dbReference>
<dbReference type="NCBIfam" id="TIGR00216">
    <property type="entry name" value="ispH_lytB"/>
    <property type="match status" value="1"/>
</dbReference>
<dbReference type="NCBIfam" id="NF002190">
    <property type="entry name" value="PRK01045.1-4"/>
    <property type="match status" value="1"/>
</dbReference>
<dbReference type="PANTHER" id="PTHR30426">
    <property type="entry name" value="4-HYDROXY-3-METHYLBUT-2-ENYL DIPHOSPHATE REDUCTASE"/>
    <property type="match status" value="1"/>
</dbReference>
<dbReference type="PANTHER" id="PTHR30426:SF0">
    <property type="entry name" value="4-HYDROXY-3-METHYLBUT-2-ENYL DIPHOSPHATE REDUCTASE"/>
    <property type="match status" value="1"/>
</dbReference>
<dbReference type="Pfam" id="PF02401">
    <property type="entry name" value="LYTB"/>
    <property type="match status" value="1"/>
</dbReference>
<protein>
    <recommendedName>
        <fullName evidence="1">4-hydroxy-3-methylbut-2-enyl diphosphate reductase</fullName>
        <shortName evidence="1">HMBPP reductase</shortName>
        <ecNumber evidence="1">1.17.7.4</ecNumber>
    </recommendedName>
</protein>
<keyword id="KW-0004">4Fe-4S</keyword>
<keyword id="KW-0408">Iron</keyword>
<keyword id="KW-0411">Iron-sulfur</keyword>
<keyword id="KW-0414">Isoprene biosynthesis</keyword>
<keyword id="KW-0479">Metal-binding</keyword>
<keyword id="KW-0560">Oxidoreductase</keyword>
<keyword id="KW-1185">Reference proteome</keyword>
<evidence type="ECO:0000255" key="1">
    <source>
        <dbReference type="HAMAP-Rule" id="MF_00191"/>
    </source>
</evidence>
<organism>
    <name type="scientific">Desulfotalea psychrophila (strain LSv54 / DSM 12343)</name>
    <dbReference type="NCBI Taxonomy" id="177439"/>
    <lineage>
        <taxon>Bacteria</taxon>
        <taxon>Pseudomonadati</taxon>
        <taxon>Thermodesulfobacteriota</taxon>
        <taxon>Desulfobulbia</taxon>
        <taxon>Desulfobulbales</taxon>
        <taxon>Desulfocapsaceae</taxon>
        <taxon>Desulfotalea</taxon>
    </lineage>
</organism>
<comment type="function">
    <text evidence="1">Catalyzes the conversion of 1-hydroxy-2-methyl-2-(E)-butenyl 4-diphosphate (HMBPP) into a mixture of isopentenyl diphosphate (IPP) and dimethylallyl diphosphate (DMAPP). Acts in the terminal step of the DOXP/MEP pathway for isoprenoid precursor biosynthesis.</text>
</comment>
<comment type="catalytic activity">
    <reaction evidence="1">
        <text>isopentenyl diphosphate + 2 oxidized [2Fe-2S]-[ferredoxin] + H2O = (2E)-4-hydroxy-3-methylbut-2-enyl diphosphate + 2 reduced [2Fe-2S]-[ferredoxin] + 2 H(+)</text>
        <dbReference type="Rhea" id="RHEA:24488"/>
        <dbReference type="Rhea" id="RHEA-COMP:10000"/>
        <dbReference type="Rhea" id="RHEA-COMP:10001"/>
        <dbReference type="ChEBI" id="CHEBI:15377"/>
        <dbReference type="ChEBI" id="CHEBI:15378"/>
        <dbReference type="ChEBI" id="CHEBI:33737"/>
        <dbReference type="ChEBI" id="CHEBI:33738"/>
        <dbReference type="ChEBI" id="CHEBI:128753"/>
        <dbReference type="ChEBI" id="CHEBI:128769"/>
        <dbReference type="EC" id="1.17.7.4"/>
    </reaction>
</comment>
<comment type="catalytic activity">
    <reaction evidence="1">
        <text>dimethylallyl diphosphate + 2 oxidized [2Fe-2S]-[ferredoxin] + H2O = (2E)-4-hydroxy-3-methylbut-2-enyl diphosphate + 2 reduced [2Fe-2S]-[ferredoxin] + 2 H(+)</text>
        <dbReference type="Rhea" id="RHEA:24825"/>
        <dbReference type="Rhea" id="RHEA-COMP:10000"/>
        <dbReference type="Rhea" id="RHEA-COMP:10001"/>
        <dbReference type="ChEBI" id="CHEBI:15377"/>
        <dbReference type="ChEBI" id="CHEBI:15378"/>
        <dbReference type="ChEBI" id="CHEBI:33737"/>
        <dbReference type="ChEBI" id="CHEBI:33738"/>
        <dbReference type="ChEBI" id="CHEBI:57623"/>
        <dbReference type="ChEBI" id="CHEBI:128753"/>
        <dbReference type="EC" id="1.17.7.4"/>
    </reaction>
</comment>
<comment type="cofactor">
    <cofactor evidence="1">
        <name>[4Fe-4S] cluster</name>
        <dbReference type="ChEBI" id="CHEBI:49883"/>
    </cofactor>
    <text evidence="1">Binds 1 [4Fe-4S] cluster per subunit.</text>
</comment>
<comment type="pathway">
    <text evidence="1">Isoprenoid biosynthesis; dimethylallyl diphosphate biosynthesis; dimethylallyl diphosphate from (2E)-4-hydroxy-3-methylbutenyl diphosphate: step 1/1.</text>
</comment>
<comment type="pathway">
    <text evidence="1">Isoprenoid biosynthesis; isopentenyl diphosphate biosynthesis via DXP pathway; isopentenyl diphosphate from 1-deoxy-D-xylulose 5-phosphate: step 6/6.</text>
</comment>
<comment type="similarity">
    <text evidence="1">Belongs to the IspH family.</text>
</comment>